<accession>A1RNN6</accession>
<keyword id="KW-0067">ATP-binding</keyword>
<keyword id="KW-0143">Chaperone</keyword>
<keyword id="KW-0963">Cytoplasm</keyword>
<keyword id="KW-0413">Isomerase</keyword>
<keyword id="KW-0547">Nucleotide-binding</keyword>
<evidence type="ECO:0000255" key="1">
    <source>
        <dbReference type="HAMAP-Rule" id="MF_00600"/>
    </source>
</evidence>
<sequence length="545" mass="57108">MAAKEVVFGNDARVKMLAGVNILANAVKVTLGPKGRNVVLDKSFGSPLITKDGVSVAKEIELEDKFENMGAQMVKEVASKANDAAGDGTTTATVLAQAIVTEGLKAVAAGMNPMDLKRGIDKAVIAAVAELKALSQPCADSKAIAQVATISANSDESIGEIIATAMEKVGKEGVITVEEGQALENELDVVEGMQFDRGYLSPYFINKPETGSVELDHPFVLLVDKKISNIRELLPILEGLAKTGKPLLIVAEDVEGEALATLVVNNMRGIVKVAAVKAPGFGDRRKAMLQDVAILTGGTVIAEEIGLELEKATLEDLGTAKRVVITKDNTTIIDGNGEQAQIEARVSQIKQQIEESTSDYDKEKLQERMAKLAGGVAVIKVGAATEVEMKEKKARVEDALHATRAAVEEGVVPGGGVALVRVASKIAELEVLNEDQKHGVVIALRAMEAPLRQIATNAGEEASVVANTVKNGSGNYGYNAGNDTYGDMLEMGILDPTKVTRCALQFAASIAGLMITTEAMVAEIPQNSAPDMGGMGGMGGMGGMM</sequence>
<name>CH60_SHESW</name>
<dbReference type="EC" id="5.6.1.7" evidence="1"/>
<dbReference type="EMBL" id="CP000503">
    <property type="protein sequence ID" value="ABM26281.1"/>
    <property type="molecule type" value="Genomic_DNA"/>
</dbReference>
<dbReference type="RefSeq" id="WP_011790719.1">
    <property type="nucleotide sequence ID" value="NC_008750.1"/>
</dbReference>
<dbReference type="SMR" id="A1RNN6"/>
<dbReference type="GeneID" id="67442166"/>
<dbReference type="KEGG" id="shw:Sputw3181_3469"/>
<dbReference type="HOGENOM" id="CLU_016503_3_0_6"/>
<dbReference type="Proteomes" id="UP000002597">
    <property type="component" value="Chromosome"/>
</dbReference>
<dbReference type="GO" id="GO:0005737">
    <property type="term" value="C:cytoplasm"/>
    <property type="evidence" value="ECO:0007669"/>
    <property type="project" value="UniProtKB-SubCell"/>
</dbReference>
<dbReference type="GO" id="GO:0005524">
    <property type="term" value="F:ATP binding"/>
    <property type="evidence" value="ECO:0007669"/>
    <property type="project" value="UniProtKB-UniRule"/>
</dbReference>
<dbReference type="GO" id="GO:0140662">
    <property type="term" value="F:ATP-dependent protein folding chaperone"/>
    <property type="evidence" value="ECO:0007669"/>
    <property type="project" value="InterPro"/>
</dbReference>
<dbReference type="GO" id="GO:0016853">
    <property type="term" value="F:isomerase activity"/>
    <property type="evidence" value="ECO:0007669"/>
    <property type="project" value="UniProtKB-KW"/>
</dbReference>
<dbReference type="GO" id="GO:0051082">
    <property type="term" value="F:unfolded protein binding"/>
    <property type="evidence" value="ECO:0007669"/>
    <property type="project" value="UniProtKB-UniRule"/>
</dbReference>
<dbReference type="GO" id="GO:0042026">
    <property type="term" value="P:protein refolding"/>
    <property type="evidence" value="ECO:0007669"/>
    <property type="project" value="UniProtKB-UniRule"/>
</dbReference>
<dbReference type="CDD" id="cd03344">
    <property type="entry name" value="GroEL"/>
    <property type="match status" value="1"/>
</dbReference>
<dbReference type="FunFam" id="1.10.560.10:FF:000001">
    <property type="entry name" value="60 kDa chaperonin"/>
    <property type="match status" value="1"/>
</dbReference>
<dbReference type="FunFam" id="3.50.7.10:FF:000001">
    <property type="entry name" value="60 kDa chaperonin"/>
    <property type="match status" value="1"/>
</dbReference>
<dbReference type="Gene3D" id="3.50.7.10">
    <property type="entry name" value="GroEL"/>
    <property type="match status" value="1"/>
</dbReference>
<dbReference type="Gene3D" id="1.10.560.10">
    <property type="entry name" value="GroEL-like equatorial domain"/>
    <property type="match status" value="1"/>
</dbReference>
<dbReference type="Gene3D" id="3.30.260.10">
    <property type="entry name" value="TCP-1-like chaperonin intermediate domain"/>
    <property type="match status" value="1"/>
</dbReference>
<dbReference type="HAMAP" id="MF_00600">
    <property type="entry name" value="CH60"/>
    <property type="match status" value="1"/>
</dbReference>
<dbReference type="InterPro" id="IPR018370">
    <property type="entry name" value="Chaperonin_Cpn60_CS"/>
</dbReference>
<dbReference type="InterPro" id="IPR001844">
    <property type="entry name" value="Cpn60/GroEL"/>
</dbReference>
<dbReference type="InterPro" id="IPR002423">
    <property type="entry name" value="Cpn60/GroEL/TCP-1"/>
</dbReference>
<dbReference type="InterPro" id="IPR027409">
    <property type="entry name" value="GroEL-like_apical_dom_sf"/>
</dbReference>
<dbReference type="InterPro" id="IPR027413">
    <property type="entry name" value="GROEL-like_equatorial_sf"/>
</dbReference>
<dbReference type="InterPro" id="IPR027410">
    <property type="entry name" value="TCP-1-like_intermed_sf"/>
</dbReference>
<dbReference type="NCBIfam" id="TIGR02348">
    <property type="entry name" value="GroEL"/>
    <property type="match status" value="1"/>
</dbReference>
<dbReference type="NCBIfam" id="NF000592">
    <property type="entry name" value="PRK00013.1"/>
    <property type="match status" value="1"/>
</dbReference>
<dbReference type="NCBIfam" id="NF009487">
    <property type="entry name" value="PRK12849.1"/>
    <property type="match status" value="1"/>
</dbReference>
<dbReference type="NCBIfam" id="NF009488">
    <property type="entry name" value="PRK12850.1"/>
    <property type="match status" value="1"/>
</dbReference>
<dbReference type="NCBIfam" id="NF009489">
    <property type="entry name" value="PRK12851.1"/>
    <property type="match status" value="1"/>
</dbReference>
<dbReference type="PANTHER" id="PTHR45633">
    <property type="entry name" value="60 KDA HEAT SHOCK PROTEIN, MITOCHONDRIAL"/>
    <property type="match status" value="1"/>
</dbReference>
<dbReference type="Pfam" id="PF00118">
    <property type="entry name" value="Cpn60_TCP1"/>
    <property type="match status" value="1"/>
</dbReference>
<dbReference type="PRINTS" id="PR00298">
    <property type="entry name" value="CHAPERONIN60"/>
</dbReference>
<dbReference type="SUPFAM" id="SSF52029">
    <property type="entry name" value="GroEL apical domain-like"/>
    <property type="match status" value="1"/>
</dbReference>
<dbReference type="SUPFAM" id="SSF48592">
    <property type="entry name" value="GroEL equatorial domain-like"/>
    <property type="match status" value="1"/>
</dbReference>
<dbReference type="SUPFAM" id="SSF54849">
    <property type="entry name" value="GroEL-intermediate domain like"/>
    <property type="match status" value="1"/>
</dbReference>
<dbReference type="PROSITE" id="PS00296">
    <property type="entry name" value="CHAPERONINS_CPN60"/>
    <property type="match status" value="1"/>
</dbReference>
<reference key="1">
    <citation type="submission" date="2006-12" db="EMBL/GenBank/DDBJ databases">
        <title>Complete sequence of Shewanella sp. W3-18-1.</title>
        <authorList>
            <consortium name="US DOE Joint Genome Institute"/>
            <person name="Copeland A."/>
            <person name="Lucas S."/>
            <person name="Lapidus A."/>
            <person name="Barry K."/>
            <person name="Detter J.C."/>
            <person name="Glavina del Rio T."/>
            <person name="Hammon N."/>
            <person name="Israni S."/>
            <person name="Dalin E."/>
            <person name="Tice H."/>
            <person name="Pitluck S."/>
            <person name="Chain P."/>
            <person name="Malfatti S."/>
            <person name="Shin M."/>
            <person name="Vergez L."/>
            <person name="Schmutz J."/>
            <person name="Larimer F."/>
            <person name="Land M."/>
            <person name="Hauser L."/>
            <person name="Kyrpides N."/>
            <person name="Lykidis A."/>
            <person name="Tiedje J."/>
            <person name="Richardson P."/>
        </authorList>
    </citation>
    <scope>NUCLEOTIDE SEQUENCE [LARGE SCALE GENOMIC DNA]</scope>
    <source>
        <strain>W3-18-1</strain>
    </source>
</reference>
<organism>
    <name type="scientific">Shewanella sp. (strain W3-18-1)</name>
    <dbReference type="NCBI Taxonomy" id="351745"/>
    <lineage>
        <taxon>Bacteria</taxon>
        <taxon>Pseudomonadati</taxon>
        <taxon>Pseudomonadota</taxon>
        <taxon>Gammaproteobacteria</taxon>
        <taxon>Alteromonadales</taxon>
        <taxon>Shewanellaceae</taxon>
        <taxon>Shewanella</taxon>
    </lineage>
</organism>
<comment type="function">
    <text evidence="1">Together with its co-chaperonin GroES, plays an essential role in assisting protein folding. The GroEL-GroES system forms a nano-cage that allows encapsulation of the non-native substrate proteins and provides a physical environment optimized to promote and accelerate protein folding.</text>
</comment>
<comment type="catalytic activity">
    <reaction evidence="1">
        <text>ATP + H2O + a folded polypeptide = ADP + phosphate + an unfolded polypeptide.</text>
        <dbReference type="EC" id="5.6.1.7"/>
    </reaction>
</comment>
<comment type="subunit">
    <text evidence="1">Forms a cylinder of 14 subunits composed of two heptameric rings stacked back-to-back. Interacts with the co-chaperonin GroES.</text>
</comment>
<comment type="subcellular location">
    <subcellularLocation>
        <location evidence="1">Cytoplasm</location>
    </subcellularLocation>
</comment>
<comment type="similarity">
    <text evidence="1">Belongs to the chaperonin (HSP60) family.</text>
</comment>
<gene>
    <name evidence="1" type="primary">groEL</name>
    <name evidence="1" type="synonym">groL</name>
    <name type="ordered locus">Sputw3181_3469</name>
</gene>
<feature type="chain" id="PRO_0000332082" description="Chaperonin GroEL">
    <location>
        <begin position="1"/>
        <end position="545"/>
    </location>
</feature>
<feature type="binding site" evidence="1">
    <location>
        <begin position="30"/>
        <end position="33"/>
    </location>
    <ligand>
        <name>ATP</name>
        <dbReference type="ChEBI" id="CHEBI:30616"/>
    </ligand>
</feature>
<feature type="binding site" evidence="1">
    <location>
        <position position="51"/>
    </location>
    <ligand>
        <name>ATP</name>
        <dbReference type="ChEBI" id="CHEBI:30616"/>
    </ligand>
</feature>
<feature type="binding site" evidence="1">
    <location>
        <begin position="87"/>
        <end position="91"/>
    </location>
    <ligand>
        <name>ATP</name>
        <dbReference type="ChEBI" id="CHEBI:30616"/>
    </ligand>
</feature>
<feature type="binding site" evidence="1">
    <location>
        <position position="415"/>
    </location>
    <ligand>
        <name>ATP</name>
        <dbReference type="ChEBI" id="CHEBI:30616"/>
    </ligand>
</feature>
<feature type="binding site" evidence="1">
    <location>
        <position position="495"/>
    </location>
    <ligand>
        <name>ATP</name>
        <dbReference type="ChEBI" id="CHEBI:30616"/>
    </ligand>
</feature>
<proteinExistence type="inferred from homology"/>
<protein>
    <recommendedName>
        <fullName evidence="1">Chaperonin GroEL</fullName>
        <ecNumber evidence="1">5.6.1.7</ecNumber>
    </recommendedName>
    <alternativeName>
        <fullName evidence="1">60 kDa chaperonin</fullName>
    </alternativeName>
    <alternativeName>
        <fullName evidence="1">Chaperonin-60</fullName>
        <shortName evidence="1">Cpn60</shortName>
    </alternativeName>
</protein>